<proteinExistence type="inferred from homology"/>
<organism>
    <name type="scientific">Porphyromonas gingivalis (strain ATCC BAA-308 / W83)</name>
    <dbReference type="NCBI Taxonomy" id="242619"/>
    <lineage>
        <taxon>Bacteria</taxon>
        <taxon>Pseudomonadati</taxon>
        <taxon>Bacteroidota</taxon>
        <taxon>Bacteroidia</taxon>
        <taxon>Bacteroidales</taxon>
        <taxon>Porphyromonadaceae</taxon>
        <taxon>Porphyromonas</taxon>
    </lineage>
</organism>
<feature type="chain" id="PRO_0000150197" description="Phosphoserine aminotransferase">
    <location>
        <begin position="1"/>
        <end position="360"/>
    </location>
</feature>
<feature type="binding site" evidence="1">
    <location>
        <position position="41"/>
    </location>
    <ligand>
        <name>L-glutamate</name>
        <dbReference type="ChEBI" id="CHEBI:29985"/>
    </ligand>
</feature>
<feature type="binding site" evidence="1">
    <location>
        <begin position="75"/>
        <end position="76"/>
    </location>
    <ligand>
        <name>pyridoxal 5'-phosphate</name>
        <dbReference type="ChEBI" id="CHEBI:597326"/>
    </ligand>
</feature>
<feature type="binding site" evidence="1">
    <location>
        <position position="99"/>
    </location>
    <ligand>
        <name>pyridoxal 5'-phosphate</name>
        <dbReference type="ChEBI" id="CHEBI:597326"/>
    </ligand>
</feature>
<feature type="binding site" evidence="1">
    <location>
        <position position="152"/>
    </location>
    <ligand>
        <name>pyridoxal 5'-phosphate</name>
        <dbReference type="ChEBI" id="CHEBI:597326"/>
    </ligand>
</feature>
<feature type="binding site" evidence="1">
    <location>
        <position position="171"/>
    </location>
    <ligand>
        <name>pyridoxal 5'-phosphate</name>
        <dbReference type="ChEBI" id="CHEBI:597326"/>
    </ligand>
</feature>
<feature type="binding site" evidence="1">
    <location>
        <position position="194"/>
    </location>
    <ligand>
        <name>pyridoxal 5'-phosphate</name>
        <dbReference type="ChEBI" id="CHEBI:597326"/>
    </ligand>
</feature>
<feature type="binding site" evidence="1">
    <location>
        <begin position="236"/>
        <end position="237"/>
    </location>
    <ligand>
        <name>pyridoxal 5'-phosphate</name>
        <dbReference type="ChEBI" id="CHEBI:597326"/>
    </ligand>
</feature>
<feature type="modified residue" description="N6-(pyridoxal phosphate)lysine" evidence="1">
    <location>
        <position position="195"/>
    </location>
</feature>
<reference key="1">
    <citation type="journal article" date="2003" name="J. Bacteriol.">
        <title>Complete genome sequence of the oral pathogenic bacterium Porphyromonas gingivalis strain W83.</title>
        <authorList>
            <person name="Nelson K.E."/>
            <person name="Fleischmann R.D."/>
            <person name="DeBoy R.T."/>
            <person name="Paulsen I.T."/>
            <person name="Fouts D.E."/>
            <person name="Eisen J.A."/>
            <person name="Daugherty S.C."/>
            <person name="Dodson R.J."/>
            <person name="Durkin A.S."/>
            <person name="Gwinn M.L."/>
            <person name="Haft D.H."/>
            <person name="Kolonay J.F."/>
            <person name="Nelson W.C."/>
            <person name="Mason T.M."/>
            <person name="Tallon L."/>
            <person name="Gray J."/>
            <person name="Granger D."/>
            <person name="Tettelin H."/>
            <person name="Dong H."/>
            <person name="Galvin J.L."/>
            <person name="Duncan M.J."/>
            <person name="Dewhirst F.E."/>
            <person name="Fraser C.M."/>
        </authorList>
    </citation>
    <scope>NUCLEOTIDE SEQUENCE [LARGE SCALE GENOMIC DNA]</scope>
    <source>
        <strain>ATCC BAA-308 / W83</strain>
    </source>
</reference>
<name>SERC_PORGI</name>
<evidence type="ECO:0000255" key="1">
    <source>
        <dbReference type="HAMAP-Rule" id="MF_00160"/>
    </source>
</evidence>
<accession>Q7MV30</accession>
<keyword id="KW-0028">Amino-acid biosynthesis</keyword>
<keyword id="KW-0032">Aminotransferase</keyword>
<keyword id="KW-0963">Cytoplasm</keyword>
<keyword id="KW-0663">Pyridoxal phosphate</keyword>
<keyword id="KW-0664">Pyridoxine biosynthesis</keyword>
<keyword id="KW-1185">Reference proteome</keyword>
<keyword id="KW-0718">Serine biosynthesis</keyword>
<keyword id="KW-0808">Transferase</keyword>
<comment type="function">
    <text evidence="1">Catalyzes the reversible conversion of 3-phosphohydroxypyruvate to phosphoserine and of 3-hydroxy-2-oxo-4-phosphonooxybutanoate to phosphohydroxythreonine.</text>
</comment>
<comment type="catalytic activity">
    <reaction evidence="1">
        <text>O-phospho-L-serine + 2-oxoglutarate = 3-phosphooxypyruvate + L-glutamate</text>
        <dbReference type="Rhea" id="RHEA:14329"/>
        <dbReference type="ChEBI" id="CHEBI:16810"/>
        <dbReference type="ChEBI" id="CHEBI:18110"/>
        <dbReference type="ChEBI" id="CHEBI:29985"/>
        <dbReference type="ChEBI" id="CHEBI:57524"/>
        <dbReference type="EC" id="2.6.1.52"/>
    </reaction>
</comment>
<comment type="catalytic activity">
    <reaction evidence="1">
        <text>4-(phosphooxy)-L-threonine + 2-oxoglutarate = (R)-3-hydroxy-2-oxo-4-phosphooxybutanoate + L-glutamate</text>
        <dbReference type="Rhea" id="RHEA:16573"/>
        <dbReference type="ChEBI" id="CHEBI:16810"/>
        <dbReference type="ChEBI" id="CHEBI:29985"/>
        <dbReference type="ChEBI" id="CHEBI:58452"/>
        <dbReference type="ChEBI" id="CHEBI:58538"/>
        <dbReference type="EC" id="2.6.1.52"/>
    </reaction>
</comment>
<comment type="cofactor">
    <cofactor evidence="1">
        <name>pyridoxal 5'-phosphate</name>
        <dbReference type="ChEBI" id="CHEBI:597326"/>
    </cofactor>
    <text evidence="1">Binds 1 pyridoxal phosphate per subunit.</text>
</comment>
<comment type="pathway">
    <text evidence="1">Amino-acid biosynthesis; L-serine biosynthesis; L-serine from 3-phospho-D-glycerate: step 2/3.</text>
</comment>
<comment type="pathway">
    <text evidence="1">Cofactor biosynthesis; pyridoxine 5'-phosphate biosynthesis; pyridoxine 5'-phosphate from D-erythrose 4-phosphate: step 3/5.</text>
</comment>
<comment type="subunit">
    <text evidence="1">Homodimer.</text>
</comment>
<comment type="subcellular location">
    <subcellularLocation>
        <location evidence="1">Cytoplasm</location>
    </subcellularLocation>
</comment>
<comment type="similarity">
    <text evidence="1">Belongs to the class-V pyridoxal-phosphate-dependent aminotransferase family. SerC subfamily.</text>
</comment>
<protein>
    <recommendedName>
        <fullName evidence="1">Phosphoserine aminotransferase</fullName>
        <ecNumber evidence="1">2.6.1.52</ecNumber>
    </recommendedName>
    <alternativeName>
        <fullName evidence="1">Phosphohydroxythreonine aminotransferase</fullName>
        <shortName evidence="1">PSAT</shortName>
    </alternativeName>
</protein>
<dbReference type="EC" id="2.6.1.52" evidence="1"/>
<dbReference type="EMBL" id="AE015924">
    <property type="protein sequence ID" value="AAQ66358.1"/>
    <property type="molecule type" value="Genomic_DNA"/>
</dbReference>
<dbReference type="RefSeq" id="WP_005874020.1">
    <property type="nucleotide sequence ID" value="NC_002950.2"/>
</dbReference>
<dbReference type="SMR" id="Q7MV30"/>
<dbReference type="STRING" id="242619.PG_1278"/>
<dbReference type="EnsemblBacteria" id="AAQ66358">
    <property type="protein sequence ID" value="AAQ66358"/>
    <property type="gene ID" value="PG_1278"/>
</dbReference>
<dbReference type="GeneID" id="29255839"/>
<dbReference type="KEGG" id="pgi:PG_1278"/>
<dbReference type="eggNOG" id="COG1932">
    <property type="taxonomic scope" value="Bacteria"/>
</dbReference>
<dbReference type="HOGENOM" id="CLU_034866_0_2_10"/>
<dbReference type="UniPathway" id="UPA00135">
    <property type="reaction ID" value="UER00197"/>
</dbReference>
<dbReference type="UniPathway" id="UPA00244">
    <property type="reaction ID" value="UER00311"/>
</dbReference>
<dbReference type="Proteomes" id="UP000000588">
    <property type="component" value="Chromosome"/>
</dbReference>
<dbReference type="GO" id="GO:0005737">
    <property type="term" value="C:cytoplasm"/>
    <property type="evidence" value="ECO:0007669"/>
    <property type="project" value="UniProtKB-SubCell"/>
</dbReference>
<dbReference type="GO" id="GO:0004648">
    <property type="term" value="F:O-phospho-L-serine:2-oxoglutarate aminotransferase activity"/>
    <property type="evidence" value="ECO:0007669"/>
    <property type="project" value="UniProtKB-UniRule"/>
</dbReference>
<dbReference type="GO" id="GO:0030170">
    <property type="term" value="F:pyridoxal phosphate binding"/>
    <property type="evidence" value="ECO:0007669"/>
    <property type="project" value="UniProtKB-UniRule"/>
</dbReference>
<dbReference type="GO" id="GO:0006564">
    <property type="term" value="P:L-serine biosynthetic process"/>
    <property type="evidence" value="ECO:0007669"/>
    <property type="project" value="UniProtKB-UniRule"/>
</dbReference>
<dbReference type="GO" id="GO:0008615">
    <property type="term" value="P:pyridoxine biosynthetic process"/>
    <property type="evidence" value="ECO:0007669"/>
    <property type="project" value="UniProtKB-UniRule"/>
</dbReference>
<dbReference type="FunFam" id="3.40.640.10:FF:000010">
    <property type="entry name" value="Phosphoserine aminotransferase"/>
    <property type="match status" value="1"/>
</dbReference>
<dbReference type="FunFam" id="3.90.1150.10:FF:000006">
    <property type="entry name" value="Phosphoserine aminotransferase"/>
    <property type="match status" value="1"/>
</dbReference>
<dbReference type="Gene3D" id="3.90.1150.10">
    <property type="entry name" value="Aspartate Aminotransferase, domain 1"/>
    <property type="match status" value="1"/>
</dbReference>
<dbReference type="Gene3D" id="3.40.640.10">
    <property type="entry name" value="Type I PLP-dependent aspartate aminotransferase-like (Major domain)"/>
    <property type="match status" value="1"/>
</dbReference>
<dbReference type="HAMAP" id="MF_00160">
    <property type="entry name" value="SerC_aminotrans_5"/>
    <property type="match status" value="1"/>
</dbReference>
<dbReference type="InterPro" id="IPR000192">
    <property type="entry name" value="Aminotrans_V_dom"/>
</dbReference>
<dbReference type="InterPro" id="IPR020578">
    <property type="entry name" value="Aminotrans_V_PyrdxlP_BS"/>
</dbReference>
<dbReference type="InterPro" id="IPR022278">
    <property type="entry name" value="Pser_aminoTfrase"/>
</dbReference>
<dbReference type="InterPro" id="IPR015424">
    <property type="entry name" value="PyrdxlP-dep_Trfase"/>
</dbReference>
<dbReference type="InterPro" id="IPR015421">
    <property type="entry name" value="PyrdxlP-dep_Trfase_major"/>
</dbReference>
<dbReference type="InterPro" id="IPR015422">
    <property type="entry name" value="PyrdxlP-dep_Trfase_small"/>
</dbReference>
<dbReference type="NCBIfam" id="NF003764">
    <property type="entry name" value="PRK05355.1"/>
    <property type="match status" value="1"/>
</dbReference>
<dbReference type="NCBIfam" id="TIGR01364">
    <property type="entry name" value="serC_1"/>
    <property type="match status" value="1"/>
</dbReference>
<dbReference type="PANTHER" id="PTHR43247">
    <property type="entry name" value="PHOSPHOSERINE AMINOTRANSFERASE"/>
    <property type="match status" value="1"/>
</dbReference>
<dbReference type="PANTHER" id="PTHR43247:SF1">
    <property type="entry name" value="PHOSPHOSERINE AMINOTRANSFERASE"/>
    <property type="match status" value="1"/>
</dbReference>
<dbReference type="Pfam" id="PF00266">
    <property type="entry name" value="Aminotran_5"/>
    <property type="match status" value="1"/>
</dbReference>
<dbReference type="PIRSF" id="PIRSF000525">
    <property type="entry name" value="SerC"/>
    <property type="match status" value="1"/>
</dbReference>
<dbReference type="SUPFAM" id="SSF53383">
    <property type="entry name" value="PLP-dependent transferases"/>
    <property type="match status" value="1"/>
</dbReference>
<dbReference type="PROSITE" id="PS00595">
    <property type="entry name" value="AA_TRANSFER_CLASS_5"/>
    <property type="match status" value="1"/>
</dbReference>
<gene>
    <name evidence="1" type="primary">serC</name>
    <name type="ordered locus">PG_1278</name>
</gene>
<sequence length="360" mass="40174">MKKHNFTAGPCILNDLVLKDAASACLNFAGTGLSVLEVSHRDKEFDAVMLEARNLFKELLDVPEGYEVLFLGGGASLQFYQVPLNLLKKKAAFINTGTWATNAIKQAKIMTQVYGGEVEVLASSEDKNFSYIPKDFVIPEDVDYFHFTTNNTIYGTEIRKDFDTKTRLVADMSSDIFSRPIDVSKYDLIYGGAQKNIGPAGATFVLVKTDVLGQVDRPLPDMLNYQIHIKKDSMFNTPPVFPVYVALQTMKWYKELGGVKVLEKMNLDKAALIYDAIDSSKIFRGTVNPEDRSIMNACFVMKDEYKELEKEFATFAASRGMVGIKGHRSVGGFRASLYNALPIESVQSLVSVMKEFEAKH</sequence>